<evidence type="ECO:0000250" key="1">
    <source>
        <dbReference type="UniProtKB" id="P00396"/>
    </source>
</evidence>
<evidence type="ECO:0000250" key="2">
    <source>
        <dbReference type="UniProtKB" id="P00401"/>
    </source>
</evidence>
<evidence type="ECO:0000255" key="3"/>
<evidence type="ECO:0000305" key="4"/>
<name>COX1_VANPO</name>
<dbReference type="EC" id="7.1.1.9"/>
<dbReference type="EMBL" id="AM698041">
    <property type="protein sequence ID" value="CAN85579.1"/>
    <property type="molecule type" value="Genomic_DNA"/>
</dbReference>
<dbReference type="RefSeq" id="YP_001331018.1">
    <property type="nucleotide sequence ID" value="NC_009638.1"/>
</dbReference>
<dbReference type="SMR" id="A6H4Q6"/>
<dbReference type="FunCoup" id="A6H4Q6">
    <property type="interactions" value="619"/>
</dbReference>
<dbReference type="STRING" id="436907.A6H4Q6"/>
<dbReference type="KEGG" id="vpo:VapofMp06"/>
<dbReference type="InParanoid" id="A6H4Q6"/>
<dbReference type="UniPathway" id="UPA00705"/>
<dbReference type="Proteomes" id="UP000000267">
    <property type="component" value="Mitochondrion"/>
</dbReference>
<dbReference type="GO" id="GO:0005743">
    <property type="term" value="C:mitochondrial inner membrane"/>
    <property type="evidence" value="ECO:0007669"/>
    <property type="project" value="UniProtKB-SubCell"/>
</dbReference>
<dbReference type="GO" id="GO:0045277">
    <property type="term" value="C:respiratory chain complex IV"/>
    <property type="evidence" value="ECO:0007669"/>
    <property type="project" value="InterPro"/>
</dbReference>
<dbReference type="GO" id="GO:0004129">
    <property type="term" value="F:cytochrome-c oxidase activity"/>
    <property type="evidence" value="ECO:0007669"/>
    <property type="project" value="UniProtKB-EC"/>
</dbReference>
<dbReference type="GO" id="GO:0020037">
    <property type="term" value="F:heme binding"/>
    <property type="evidence" value="ECO:0007669"/>
    <property type="project" value="InterPro"/>
</dbReference>
<dbReference type="GO" id="GO:0046872">
    <property type="term" value="F:metal ion binding"/>
    <property type="evidence" value="ECO:0007669"/>
    <property type="project" value="UniProtKB-KW"/>
</dbReference>
<dbReference type="GO" id="GO:0015990">
    <property type="term" value="P:electron transport coupled proton transport"/>
    <property type="evidence" value="ECO:0007669"/>
    <property type="project" value="TreeGrafter"/>
</dbReference>
<dbReference type="GO" id="GO:0006123">
    <property type="term" value="P:mitochondrial electron transport, cytochrome c to oxygen"/>
    <property type="evidence" value="ECO:0007669"/>
    <property type="project" value="TreeGrafter"/>
</dbReference>
<dbReference type="CDD" id="cd01663">
    <property type="entry name" value="Cyt_c_Oxidase_I"/>
    <property type="match status" value="1"/>
</dbReference>
<dbReference type="FunFam" id="1.20.210.10:FF:000001">
    <property type="entry name" value="Cytochrome c oxidase subunit 1"/>
    <property type="match status" value="1"/>
</dbReference>
<dbReference type="Gene3D" id="1.20.210.10">
    <property type="entry name" value="Cytochrome c oxidase-like, subunit I domain"/>
    <property type="match status" value="1"/>
</dbReference>
<dbReference type="InterPro" id="IPR023616">
    <property type="entry name" value="Cyt_c_oxase-like_su1_dom"/>
</dbReference>
<dbReference type="InterPro" id="IPR036927">
    <property type="entry name" value="Cyt_c_oxase-like_su1_sf"/>
</dbReference>
<dbReference type="InterPro" id="IPR000883">
    <property type="entry name" value="Cyt_C_Oxase_1"/>
</dbReference>
<dbReference type="InterPro" id="IPR023615">
    <property type="entry name" value="Cyt_c_Oxase_su1_BS"/>
</dbReference>
<dbReference type="InterPro" id="IPR033944">
    <property type="entry name" value="Cyt_c_oxase_su1_dom"/>
</dbReference>
<dbReference type="PANTHER" id="PTHR10422">
    <property type="entry name" value="CYTOCHROME C OXIDASE SUBUNIT 1"/>
    <property type="match status" value="1"/>
</dbReference>
<dbReference type="PANTHER" id="PTHR10422:SF18">
    <property type="entry name" value="CYTOCHROME C OXIDASE SUBUNIT 1"/>
    <property type="match status" value="1"/>
</dbReference>
<dbReference type="Pfam" id="PF00115">
    <property type="entry name" value="COX1"/>
    <property type="match status" value="1"/>
</dbReference>
<dbReference type="PRINTS" id="PR01165">
    <property type="entry name" value="CYCOXIDASEI"/>
</dbReference>
<dbReference type="SUPFAM" id="SSF81442">
    <property type="entry name" value="Cytochrome c oxidase subunit I-like"/>
    <property type="match status" value="1"/>
</dbReference>
<dbReference type="PROSITE" id="PS50855">
    <property type="entry name" value="COX1"/>
    <property type="match status" value="1"/>
</dbReference>
<dbReference type="PROSITE" id="PS00077">
    <property type="entry name" value="COX1_CUB"/>
    <property type="match status" value="1"/>
</dbReference>
<protein>
    <recommendedName>
        <fullName>Cytochrome c oxidase subunit 1</fullName>
        <ecNumber>7.1.1.9</ecNumber>
    </recommendedName>
    <alternativeName>
        <fullName>Cytochrome c oxidase polypeptide I</fullName>
    </alternativeName>
</protein>
<accession>A6H4Q6</accession>
<geneLocation type="mitochondrion"/>
<gene>
    <name type="primary">COX1</name>
    <name type="ORF">VapofMp06</name>
</gene>
<sequence>MLQRWLYSTNAKDIAVLYFIFSVFCGMAGTGMSMIIRLELAGPGNQYLGGNHQLFNTLVTGHAILMVFFLVMPALIGGFGNYLLPLMIGASDMSYPRLNNISFWLLPPALVCLVTSTLVESGAGTGWTVYAPLSGIQSHSGPSVDLAIFALHMTSISSLLGAINFIVTTLNMRTNGMSMHKMPLFVWAIFITAFLLLLSLPVLSAGVTLLLMDRNFNTSFYEVAGGGDPVLYQHLFWFFGHPEVYIMIVPAFGVISHIVSTYSKKPVFGEISMVYAMASIGLLGFLVWSHHMYVVGLDCDTRAYFTSATMIIAIPTGIKIFSWLATIYGGSIRLAVPMMYAIAFLFLFTLGGFTGVALANASLDVAFHDTYYVVAHFHYVLSMGAVFSMFAGYYYWSPHILGLNYNEKLAQIQFWLIFVGVNVIFLPMHFLGINGMPRRIPDYPDAFAGWNYVSSIGSFIAMISLILFIYILFDQLYNGLENKINNKSVTFMKAPDFVESNNKFNLNTIKTSSIEFLLNSPPAVHSFNTPAVTN</sequence>
<keyword id="KW-0106">Calcium</keyword>
<keyword id="KW-0186">Copper</keyword>
<keyword id="KW-0249">Electron transport</keyword>
<keyword id="KW-0349">Heme</keyword>
<keyword id="KW-0408">Iron</keyword>
<keyword id="KW-0460">Magnesium</keyword>
<keyword id="KW-0472">Membrane</keyword>
<keyword id="KW-0479">Metal-binding</keyword>
<keyword id="KW-0496">Mitochondrion</keyword>
<keyword id="KW-0999">Mitochondrion inner membrane</keyword>
<keyword id="KW-1185">Reference proteome</keyword>
<keyword id="KW-0679">Respiratory chain</keyword>
<keyword id="KW-1278">Translocase</keyword>
<keyword id="KW-0812">Transmembrane</keyword>
<keyword id="KW-1133">Transmembrane helix</keyword>
<keyword id="KW-0813">Transport</keyword>
<feature type="chain" id="PRO_0000356867" description="Cytochrome c oxidase subunit 1">
    <location>
        <begin position="1"/>
        <end position="534"/>
    </location>
</feature>
<feature type="transmembrane region" description="Helical" evidence="3">
    <location>
        <begin position="16"/>
        <end position="36"/>
    </location>
</feature>
<feature type="transmembrane region" description="Helical" evidence="3">
    <location>
        <begin position="64"/>
        <end position="84"/>
    </location>
</feature>
<feature type="transmembrane region" description="Helical" evidence="3">
    <location>
        <begin position="101"/>
        <end position="121"/>
    </location>
</feature>
<feature type="transmembrane region" description="Helical" evidence="3">
    <location>
        <begin position="147"/>
        <end position="167"/>
    </location>
</feature>
<feature type="transmembrane region" description="Helical" evidence="3">
    <location>
        <begin position="183"/>
        <end position="203"/>
    </location>
</feature>
<feature type="transmembrane region" description="Helical" evidence="3">
    <location>
        <begin position="235"/>
        <end position="255"/>
    </location>
</feature>
<feature type="transmembrane region" description="Helical" evidence="3">
    <location>
        <begin position="267"/>
        <end position="287"/>
    </location>
</feature>
<feature type="transmembrane region" description="Helical" evidence="3">
    <location>
        <begin position="310"/>
        <end position="330"/>
    </location>
</feature>
<feature type="transmembrane region" description="Helical" evidence="3">
    <location>
        <begin position="338"/>
        <end position="358"/>
    </location>
</feature>
<feature type="transmembrane region" description="Helical" evidence="3">
    <location>
        <begin position="372"/>
        <end position="392"/>
    </location>
</feature>
<feature type="transmembrane region" description="Helical" evidence="3">
    <location>
        <begin position="414"/>
        <end position="434"/>
    </location>
</feature>
<feature type="transmembrane region" description="Helical" evidence="3">
    <location>
        <begin position="453"/>
        <end position="473"/>
    </location>
</feature>
<feature type="binding site" evidence="2">
    <location>
        <position position="39"/>
    </location>
    <ligand>
        <name>Ca(2+)</name>
        <dbReference type="ChEBI" id="CHEBI:29108"/>
    </ligand>
</feature>
<feature type="binding site" evidence="2">
    <location>
        <position position="44"/>
    </location>
    <ligand>
        <name>Ca(2+)</name>
        <dbReference type="ChEBI" id="CHEBI:29108"/>
    </ligand>
</feature>
<feature type="binding site" description="axial binding residue" evidence="2">
    <location>
        <position position="62"/>
    </location>
    <ligand>
        <name>Fe(II)-heme a</name>
        <dbReference type="ChEBI" id="CHEBI:61715"/>
        <note>low-spin</note>
    </ligand>
    <ligandPart>
        <name>Fe</name>
        <dbReference type="ChEBI" id="CHEBI:18248"/>
    </ligandPart>
</feature>
<feature type="binding site" evidence="2">
    <location>
        <position position="241"/>
    </location>
    <ligand>
        <name>Cu cation</name>
        <dbReference type="ChEBI" id="CHEBI:23378"/>
        <label>B</label>
    </ligand>
</feature>
<feature type="binding site" evidence="1">
    <location>
        <position position="245"/>
    </location>
    <ligand>
        <name>O2</name>
        <dbReference type="ChEBI" id="CHEBI:15379"/>
    </ligand>
</feature>
<feature type="binding site" evidence="2">
    <location>
        <position position="290"/>
    </location>
    <ligand>
        <name>Cu cation</name>
        <dbReference type="ChEBI" id="CHEBI:23378"/>
        <label>B</label>
    </ligand>
</feature>
<feature type="binding site" evidence="2">
    <location>
        <position position="291"/>
    </location>
    <ligand>
        <name>Cu cation</name>
        <dbReference type="ChEBI" id="CHEBI:23378"/>
        <label>B</label>
    </ligand>
</feature>
<feature type="binding site" evidence="2">
    <location>
        <position position="368"/>
    </location>
    <ligand>
        <name>Mg(2+)</name>
        <dbReference type="ChEBI" id="CHEBI:18420"/>
        <note>ligand shared with subunit 2</note>
    </ligand>
</feature>
<feature type="binding site" evidence="2">
    <location>
        <position position="369"/>
    </location>
    <ligand>
        <name>Mg(2+)</name>
        <dbReference type="ChEBI" id="CHEBI:18420"/>
        <note>ligand shared with subunit 2</note>
    </ligand>
</feature>
<feature type="binding site" description="axial binding residue" evidence="2">
    <location>
        <position position="376"/>
    </location>
    <ligand>
        <name>heme a3</name>
        <dbReference type="ChEBI" id="CHEBI:83282"/>
        <note>high-spin</note>
    </ligand>
    <ligandPart>
        <name>Fe</name>
        <dbReference type="ChEBI" id="CHEBI:18248"/>
    </ligandPart>
</feature>
<feature type="binding site" description="axial binding residue" evidence="2">
    <location>
        <position position="378"/>
    </location>
    <ligand>
        <name>Fe(II)-heme a</name>
        <dbReference type="ChEBI" id="CHEBI:61715"/>
        <note>low-spin</note>
    </ligand>
    <ligandPart>
        <name>Fe</name>
        <dbReference type="ChEBI" id="CHEBI:18248"/>
    </ligandPart>
</feature>
<feature type="binding site" evidence="2">
    <location>
        <position position="441"/>
    </location>
    <ligand>
        <name>Ca(2+)</name>
        <dbReference type="ChEBI" id="CHEBI:29108"/>
    </ligand>
</feature>
<feature type="cross-link" description="1'-histidyl-3'-tyrosine (His-Tyr)" evidence="2">
    <location>
        <begin position="241"/>
        <end position="245"/>
    </location>
</feature>
<proteinExistence type="inferred from homology"/>
<organism>
    <name type="scientific">Vanderwaltozyma polyspora (strain ATCC 22028 / DSM 70294 / BCRC 21397 / CBS 2163 / NBRC 10782 / NRRL Y-8283 / UCD 57-17)</name>
    <name type="common">Kluyveromyces polysporus</name>
    <dbReference type="NCBI Taxonomy" id="436907"/>
    <lineage>
        <taxon>Eukaryota</taxon>
        <taxon>Fungi</taxon>
        <taxon>Dikarya</taxon>
        <taxon>Ascomycota</taxon>
        <taxon>Saccharomycotina</taxon>
        <taxon>Saccharomycetes</taxon>
        <taxon>Saccharomycetales</taxon>
        <taxon>Saccharomycetaceae</taxon>
        <taxon>Vanderwaltozyma</taxon>
    </lineage>
</organism>
<comment type="function">
    <text evidence="2">Component of the cytochrome c oxidase, the last enzyme in the mitochondrial electron transport chain which drives oxidative phosphorylation. The respiratory chain contains 3 multisubunit complexes succinate dehydrogenase (complex II, CII), ubiquinol-cytochrome c oxidoreductase (cytochrome b-c1 complex, complex III, CIII) and cytochrome c oxidase (complex IV, CIV), that cooperate to transfer electrons derived from NADH and succinate to molecular oxygen, creating an electrochemical gradient over the inner membrane that drives transmembrane transport and the ATP synthase. Cytochrome c oxidase is the component of the respiratory chain that catalyzes the reduction of oxygen to water. Electrons originating from reduced cytochrome c in the intermembrane space (IMS) are transferred via the dinuclear copper A center (CU(A)) of subunit 2 and heme A of subunit 1 to the active site in subunit 1, a binuclear center (BNC) formed by heme A3 and copper B (CU(B)). The BNC reduces molecular oxygen to 2 water molecules using 4 electrons from cytochrome c in the IMS and 4 protons from the mitochondrial matrix.</text>
</comment>
<comment type="catalytic activity">
    <reaction evidence="2">
        <text>4 Fe(II)-[cytochrome c] + O2 + 8 H(+)(in) = 4 Fe(III)-[cytochrome c] + 2 H2O + 4 H(+)(out)</text>
        <dbReference type="Rhea" id="RHEA:11436"/>
        <dbReference type="Rhea" id="RHEA-COMP:10350"/>
        <dbReference type="Rhea" id="RHEA-COMP:14399"/>
        <dbReference type="ChEBI" id="CHEBI:15377"/>
        <dbReference type="ChEBI" id="CHEBI:15378"/>
        <dbReference type="ChEBI" id="CHEBI:15379"/>
        <dbReference type="ChEBI" id="CHEBI:29033"/>
        <dbReference type="ChEBI" id="CHEBI:29034"/>
        <dbReference type="EC" id="7.1.1.9"/>
    </reaction>
    <physiologicalReaction direction="left-to-right" evidence="2">
        <dbReference type="Rhea" id="RHEA:11437"/>
    </physiologicalReaction>
</comment>
<comment type="cofactor">
    <cofactor evidence="2">
        <name>heme</name>
        <dbReference type="ChEBI" id="CHEBI:30413"/>
    </cofactor>
    <text evidence="2">Binds 2 heme A groups non-covalently per subunit.</text>
</comment>
<comment type="cofactor">
    <cofactor evidence="2">
        <name>Cu cation</name>
        <dbReference type="ChEBI" id="CHEBI:23378"/>
    </cofactor>
    <text evidence="2">Binds a copper B center.</text>
</comment>
<comment type="pathway">
    <text evidence="2">Energy metabolism; oxidative phosphorylation.</text>
</comment>
<comment type="subunit">
    <text evidence="2">Component of the cytochrome c oxidase (complex IV, CIV), a multisubunit enzyme composed of a catalytic core of 3 subunits and several supernumerary subunits. The complex exists as a monomer or a dimer and forms supercomplexes (SCs) in the inner mitochondrial membrane with ubiquinol-cytochrome c oxidoreductase (cytochrome b-c1 complex, complex III, CIII).</text>
</comment>
<comment type="subcellular location">
    <subcellularLocation>
        <location evidence="2">Mitochondrion inner membrane</location>
        <topology evidence="2">Multi-pass membrane protein</topology>
    </subcellularLocation>
</comment>
<comment type="similarity">
    <text evidence="4">Belongs to the heme-copper respiratory oxidase family.</text>
</comment>
<reference key="1">
    <citation type="journal article" date="2007" name="Proc. Natl. Acad. Sci. U.S.A.">
        <title>Independent sorting-out of thousands of duplicated gene pairs in two yeast species descended from a whole-genome duplication.</title>
        <authorList>
            <person name="Scannell D.R."/>
            <person name="Frank A.C."/>
            <person name="Conant G.C."/>
            <person name="Byrne K.P."/>
            <person name="Woolfit M."/>
            <person name="Wolfe K.H."/>
        </authorList>
    </citation>
    <scope>NUCLEOTIDE SEQUENCE [LARGE SCALE GENOMIC DNA]</scope>
    <source>
        <strain>ATCC 22028 / DSM 70294 / BCRC 21397 / CBS 2163 / NBRC 10782 / NRRL Y-8283 / UCD 57-17</strain>
    </source>
</reference>